<feature type="chain" id="PRO_0000133738" description="Large ribosomal subunit protein uL13">
    <location>
        <begin position="1"/>
        <end position="142"/>
    </location>
</feature>
<organism>
    <name type="scientific">Histophilus somni</name>
    <name type="common">Haemophilus somnus</name>
    <dbReference type="NCBI Taxonomy" id="731"/>
    <lineage>
        <taxon>Bacteria</taxon>
        <taxon>Pseudomonadati</taxon>
        <taxon>Pseudomonadota</taxon>
        <taxon>Gammaproteobacteria</taxon>
        <taxon>Pasteurellales</taxon>
        <taxon>Pasteurellaceae</taxon>
        <taxon>Histophilus</taxon>
    </lineage>
</organism>
<reference key="1">
    <citation type="journal article" date="1992" name="J. Bacteriol.">
        <title>Cloning, sequencing, expression, and functional studies of a 15,000-molecular-weight Haemophilus somnus antigen similar to Escherichia coli ribosomal protein S9.</title>
        <authorList>
            <person name="Theisen M."/>
            <person name="Potter A.A."/>
        </authorList>
    </citation>
    <scope>NUCLEOTIDE SEQUENCE [GENOMIC DNA]</scope>
    <scope>RIBOSOMAL LOCALIZATION</scope>
    <source>
        <strain>HS25</strain>
    </source>
</reference>
<evidence type="ECO:0000255" key="1">
    <source>
        <dbReference type="HAMAP-Rule" id="MF_01366"/>
    </source>
</evidence>
<evidence type="ECO:0000305" key="2"/>
<comment type="function">
    <text evidence="1">This protein is one of the early assembly proteins of the 50S ribosomal subunit, although it is not seen to bind rRNA by itself. It is important during the early stages of 50S assembly.</text>
</comment>
<comment type="subunit">
    <text>Part of the 50S ribosomal subunit.</text>
</comment>
<comment type="similarity">
    <text evidence="1">Belongs to the universal ribosomal protein uL13 family.</text>
</comment>
<sequence length="142" mass="15974">MKTFVAKPETVKRDWYVVDATGKTLGRLGHELARRLRGKHKAEYTPHVDTGDYIVVINAEKVAVTGNKETDKLYYWHTGYVGGIKQATFKEMIARRPEAVIEIAVKGMLPKGPLGRAMFRKLKVYAGSEHNHAAQQPQVLDI</sequence>
<keyword id="KW-0687">Ribonucleoprotein</keyword>
<keyword id="KW-0689">Ribosomal protein</keyword>
<name>RL13_HISSO</name>
<accession>P31781</accession>
<dbReference type="EMBL" id="S75161">
    <property type="protein sequence ID" value="AAB20820.2"/>
    <property type="molecule type" value="Genomic_DNA"/>
</dbReference>
<dbReference type="PIR" id="A43310">
    <property type="entry name" value="A43310"/>
</dbReference>
<dbReference type="SMR" id="P31781"/>
<dbReference type="GO" id="GO:0022625">
    <property type="term" value="C:cytosolic large ribosomal subunit"/>
    <property type="evidence" value="ECO:0007669"/>
    <property type="project" value="TreeGrafter"/>
</dbReference>
<dbReference type="GO" id="GO:0003729">
    <property type="term" value="F:mRNA binding"/>
    <property type="evidence" value="ECO:0007669"/>
    <property type="project" value="TreeGrafter"/>
</dbReference>
<dbReference type="GO" id="GO:0003735">
    <property type="term" value="F:structural constituent of ribosome"/>
    <property type="evidence" value="ECO:0007669"/>
    <property type="project" value="InterPro"/>
</dbReference>
<dbReference type="GO" id="GO:0017148">
    <property type="term" value="P:negative regulation of translation"/>
    <property type="evidence" value="ECO:0007669"/>
    <property type="project" value="TreeGrafter"/>
</dbReference>
<dbReference type="GO" id="GO:0006412">
    <property type="term" value="P:translation"/>
    <property type="evidence" value="ECO:0007669"/>
    <property type="project" value="UniProtKB-UniRule"/>
</dbReference>
<dbReference type="CDD" id="cd00392">
    <property type="entry name" value="Ribosomal_L13"/>
    <property type="match status" value="1"/>
</dbReference>
<dbReference type="FunFam" id="3.90.1180.10:FF:000001">
    <property type="entry name" value="50S ribosomal protein L13"/>
    <property type="match status" value="1"/>
</dbReference>
<dbReference type="Gene3D" id="3.90.1180.10">
    <property type="entry name" value="Ribosomal protein L13"/>
    <property type="match status" value="1"/>
</dbReference>
<dbReference type="HAMAP" id="MF_01366">
    <property type="entry name" value="Ribosomal_uL13"/>
    <property type="match status" value="1"/>
</dbReference>
<dbReference type="InterPro" id="IPR005822">
    <property type="entry name" value="Ribosomal_uL13"/>
</dbReference>
<dbReference type="InterPro" id="IPR005823">
    <property type="entry name" value="Ribosomal_uL13_bac-type"/>
</dbReference>
<dbReference type="InterPro" id="IPR023563">
    <property type="entry name" value="Ribosomal_uL13_CS"/>
</dbReference>
<dbReference type="InterPro" id="IPR036899">
    <property type="entry name" value="Ribosomal_uL13_sf"/>
</dbReference>
<dbReference type="NCBIfam" id="TIGR01066">
    <property type="entry name" value="rplM_bact"/>
    <property type="match status" value="1"/>
</dbReference>
<dbReference type="PANTHER" id="PTHR11545:SF2">
    <property type="entry name" value="LARGE RIBOSOMAL SUBUNIT PROTEIN UL13M"/>
    <property type="match status" value="1"/>
</dbReference>
<dbReference type="PANTHER" id="PTHR11545">
    <property type="entry name" value="RIBOSOMAL PROTEIN L13"/>
    <property type="match status" value="1"/>
</dbReference>
<dbReference type="Pfam" id="PF00572">
    <property type="entry name" value="Ribosomal_L13"/>
    <property type="match status" value="1"/>
</dbReference>
<dbReference type="PIRSF" id="PIRSF002181">
    <property type="entry name" value="Ribosomal_L13"/>
    <property type="match status" value="1"/>
</dbReference>
<dbReference type="SUPFAM" id="SSF52161">
    <property type="entry name" value="Ribosomal protein L13"/>
    <property type="match status" value="1"/>
</dbReference>
<dbReference type="PROSITE" id="PS00783">
    <property type="entry name" value="RIBOSOMAL_L13"/>
    <property type="match status" value="1"/>
</dbReference>
<protein>
    <recommendedName>
        <fullName evidence="1">Large ribosomal subunit protein uL13</fullName>
    </recommendedName>
    <alternativeName>
        <fullName evidence="2">50S ribosomal protein L13</fullName>
    </alternativeName>
</protein>
<gene>
    <name evidence="1" type="primary">rplM</name>
</gene>
<proteinExistence type="inferred from homology"/>